<feature type="chain" id="PRO_0000207965" description="Protein PsbN">
    <location>
        <begin position="1"/>
        <end position="43"/>
    </location>
</feature>
<feature type="transmembrane region" description="Helical" evidence="1">
    <location>
        <begin position="5"/>
        <end position="27"/>
    </location>
</feature>
<name>PSBN_THUPL</name>
<reference key="1">
    <citation type="submission" date="2002-07" db="EMBL/GenBank/DDBJ databases">
        <title>Parsing out signal and noise for seed-plant phylogenetic inference.</title>
        <authorList>
            <person name="Graham S.W."/>
            <person name="Rai H.S."/>
            <person name="Ikegami K."/>
            <person name="Reeves P.A."/>
            <person name="Olmstead R.G."/>
        </authorList>
    </citation>
    <scope>NUCLEOTIDE SEQUENCE [GENOMIC DNA]</scope>
</reference>
<comment type="function">
    <text evidence="1">May play a role in photosystem I and II biogenesis.</text>
</comment>
<comment type="subcellular location">
    <subcellularLocation>
        <location evidence="1">Plastid</location>
        <location evidence="1">Chloroplast thylakoid membrane</location>
        <topology evidence="1">Single-pass membrane protein</topology>
    </subcellularLocation>
</comment>
<comment type="similarity">
    <text evidence="1">Belongs to the PsbN family.</text>
</comment>
<comment type="caution">
    <text evidence="1">Originally thought to be a component of PSII; based on experiments in Synechocystis, N.tabacum and barley, and its absence from PSII in T.elongatus and T.vulcanus, this is probably not true.</text>
</comment>
<proteinExistence type="inferred from homology"/>
<sequence length="43" mass="4829">METATLFAISISCLLVSFTGYALYTAFGQPSEQLRDPFEEHED</sequence>
<dbReference type="EMBL" id="AF528917">
    <property type="protein sequence ID" value="AAQ09454.1"/>
    <property type="molecule type" value="Genomic_DNA"/>
</dbReference>
<dbReference type="RefSeq" id="YP_009629121.1">
    <property type="nucleotide sequence ID" value="NC_042175.1"/>
</dbReference>
<dbReference type="SMR" id="Q6EYB9"/>
<dbReference type="GeneID" id="40139201"/>
<dbReference type="GO" id="GO:0009535">
    <property type="term" value="C:chloroplast thylakoid membrane"/>
    <property type="evidence" value="ECO:0007669"/>
    <property type="project" value="UniProtKB-SubCell"/>
</dbReference>
<dbReference type="GO" id="GO:0015979">
    <property type="term" value="P:photosynthesis"/>
    <property type="evidence" value="ECO:0007669"/>
    <property type="project" value="InterPro"/>
</dbReference>
<dbReference type="HAMAP" id="MF_00293">
    <property type="entry name" value="PSII_PsbN"/>
    <property type="match status" value="1"/>
</dbReference>
<dbReference type="InterPro" id="IPR003398">
    <property type="entry name" value="PSII_PsbN"/>
</dbReference>
<dbReference type="PANTHER" id="PTHR35326">
    <property type="entry name" value="PROTEIN PSBN"/>
    <property type="match status" value="1"/>
</dbReference>
<dbReference type="PANTHER" id="PTHR35326:SF3">
    <property type="entry name" value="PROTEIN PSBN"/>
    <property type="match status" value="1"/>
</dbReference>
<dbReference type="Pfam" id="PF02468">
    <property type="entry name" value="PsbN"/>
    <property type="match status" value="1"/>
</dbReference>
<accession>Q6EYB9</accession>
<evidence type="ECO:0000255" key="1">
    <source>
        <dbReference type="HAMAP-Rule" id="MF_00293"/>
    </source>
</evidence>
<organism>
    <name type="scientific">Thuja plicata</name>
    <name type="common">Western red-cedar</name>
    <name type="synonym">Giant arborvitae</name>
    <dbReference type="NCBI Taxonomy" id="3316"/>
    <lineage>
        <taxon>Eukaryota</taxon>
        <taxon>Viridiplantae</taxon>
        <taxon>Streptophyta</taxon>
        <taxon>Embryophyta</taxon>
        <taxon>Tracheophyta</taxon>
        <taxon>Spermatophyta</taxon>
        <taxon>Pinopsida</taxon>
        <taxon>Pinidae</taxon>
        <taxon>Conifers II</taxon>
        <taxon>Cupressales</taxon>
        <taxon>Cupressaceae</taxon>
        <taxon>Thuja</taxon>
    </lineage>
</organism>
<keyword id="KW-0150">Chloroplast</keyword>
<keyword id="KW-0472">Membrane</keyword>
<keyword id="KW-0934">Plastid</keyword>
<keyword id="KW-0793">Thylakoid</keyword>
<keyword id="KW-0812">Transmembrane</keyword>
<keyword id="KW-1133">Transmembrane helix</keyword>
<protein>
    <recommendedName>
        <fullName evidence="1">Protein PsbN</fullName>
    </recommendedName>
</protein>
<gene>
    <name evidence="1" type="primary">psbN</name>
</gene>
<geneLocation type="chloroplast"/>